<accession>Q2GJY7</accession>
<feature type="chain" id="PRO_0000364783" description="Ferredoxin--NADP reductase">
    <location>
        <begin position="1"/>
        <end position="338"/>
    </location>
</feature>
<feature type="binding site" evidence="1">
    <location>
        <position position="36"/>
    </location>
    <ligand>
        <name>FAD</name>
        <dbReference type="ChEBI" id="CHEBI:57692"/>
    </ligand>
</feature>
<feature type="binding site" evidence="1">
    <location>
        <position position="44"/>
    </location>
    <ligand>
        <name>FAD</name>
        <dbReference type="ChEBI" id="CHEBI:57692"/>
    </ligand>
</feature>
<feature type="binding site" evidence="1">
    <location>
        <position position="49"/>
    </location>
    <ligand>
        <name>FAD</name>
        <dbReference type="ChEBI" id="CHEBI:57692"/>
    </ligand>
</feature>
<feature type="binding site" evidence="1">
    <location>
        <position position="89"/>
    </location>
    <ligand>
        <name>FAD</name>
        <dbReference type="ChEBI" id="CHEBI:57692"/>
    </ligand>
</feature>
<feature type="binding site" evidence="1">
    <location>
        <position position="123"/>
    </location>
    <ligand>
        <name>FAD</name>
        <dbReference type="ChEBI" id="CHEBI:57692"/>
    </ligand>
</feature>
<feature type="binding site" evidence="1">
    <location>
        <position position="290"/>
    </location>
    <ligand>
        <name>FAD</name>
        <dbReference type="ChEBI" id="CHEBI:57692"/>
    </ligand>
</feature>
<feature type="binding site" evidence="1">
    <location>
        <position position="331"/>
    </location>
    <ligand>
        <name>FAD</name>
        <dbReference type="ChEBI" id="CHEBI:57692"/>
    </ligand>
</feature>
<organism>
    <name type="scientific">Anaplasma phagocytophilum (strain HZ)</name>
    <dbReference type="NCBI Taxonomy" id="212042"/>
    <lineage>
        <taxon>Bacteria</taxon>
        <taxon>Pseudomonadati</taxon>
        <taxon>Pseudomonadota</taxon>
        <taxon>Alphaproteobacteria</taxon>
        <taxon>Rickettsiales</taxon>
        <taxon>Anaplasmataceae</taxon>
        <taxon>Anaplasma</taxon>
        <taxon>phagocytophilum group</taxon>
    </lineage>
</organism>
<evidence type="ECO:0000255" key="1">
    <source>
        <dbReference type="HAMAP-Rule" id="MF_01685"/>
    </source>
</evidence>
<reference key="1">
    <citation type="journal article" date="2006" name="PLoS Genet.">
        <title>Comparative genomics of emerging human ehrlichiosis agents.</title>
        <authorList>
            <person name="Dunning Hotopp J.C."/>
            <person name="Lin M."/>
            <person name="Madupu R."/>
            <person name="Crabtree J."/>
            <person name="Angiuoli S.V."/>
            <person name="Eisen J.A."/>
            <person name="Seshadri R."/>
            <person name="Ren Q."/>
            <person name="Wu M."/>
            <person name="Utterback T.R."/>
            <person name="Smith S."/>
            <person name="Lewis M."/>
            <person name="Khouri H."/>
            <person name="Zhang C."/>
            <person name="Niu H."/>
            <person name="Lin Q."/>
            <person name="Ohashi N."/>
            <person name="Zhi N."/>
            <person name="Nelson W.C."/>
            <person name="Brinkac L.M."/>
            <person name="Dodson R.J."/>
            <person name="Rosovitz M.J."/>
            <person name="Sundaram J.P."/>
            <person name="Daugherty S.C."/>
            <person name="Davidsen T."/>
            <person name="Durkin A.S."/>
            <person name="Gwinn M.L."/>
            <person name="Haft D.H."/>
            <person name="Selengut J.D."/>
            <person name="Sullivan S.A."/>
            <person name="Zafar N."/>
            <person name="Zhou L."/>
            <person name="Benahmed F."/>
            <person name="Forberger H."/>
            <person name="Halpin R."/>
            <person name="Mulligan S."/>
            <person name="Robinson J."/>
            <person name="White O."/>
            <person name="Rikihisa Y."/>
            <person name="Tettelin H."/>
        </authorList>
    </citation>
    <scope>NUCLEOTIDE SEQUENCE [LARGE SCALE GENOMIC DNA]</scope>
    <source>
        <strain>HZ</strain>
    </source>
</reference>
<sequence>MEYSSVFDVAIVGAGPVGLFTVFQAGMLGMNSCVIDALDIVGGQCAVLYPEKPIYDIPGYPMITAQDLVNNLKKQAEPFAPVYIMGQFVESISEGPDCFVLQTNKGTSVKCRAIIVAAGSGGFGPNRPPLDGIMEYENKSVFYNVSQMATFKNKKVVIAGGGDSAADWAVNLAEVADKLYVIHRRKSFRCAPNTLKKLEELADEGRINVLIPYQLAGLDGENGELRSVVVRNITTKEEIPIGADFLLPFFGISANLGEIVNWGLGVEGFQIPVEQSTCRTRRSKIYAVGDIAAYPGKIKLILVGFSEAALACQDIRAVLFPDTPLNFQYSTSKGIPTL</sequence>
<gene>
    <name type="ordered locus">APH_0734</name>
</gene>
<protein>
    <recommendedName>
        <fullName evidence="1">Ferredoxin--NADP reductase</fullName>
        <shortName evidence="1">FNR</shortName>
        <shortName evidence="1">Fd-NADP(+) reductase</shortName>
        <ecNumber evidence="1">1.18.1.2</ecNumber>
    </recommendedName>
</protein>
<keyword id="KW-0274">FAD</keyword>
<keyword id="KW-0285">Flavoprotein</keyword>
<keyword id="KW-0521">NADP</keyword>
<keyword id="KW-0560">Oxidoreductase</keyword>
<proteinExistence type="inferred from homology"/>
<dbReference type="EC" id="1.18.1.2" evidence="1"/>
<dbReference type="EMBL" id="CP000235">
    <property type="protein sequence ID" value="ABD43586.1"/>
    <property type="molecule type" value="Genomic_DNA"/>
</dbReference>
<dbReference type="RefSeq" id="WP_011450835.1">
    <property type="nucleotide sequence ID" value="NC_007797.1"/>
</dbReference>
<dbReference type="SMR" id="Q2GJY7"/>
<dbReference type="STRING" id="212042.APH_0734"/>
<dbReference type="PaxDb" id="212042-APH_0734"/>
<dbReference type="EnsemblBacteria" id="ABD43586">
    <property type="protein sequence ID" value="ABD43586"/>
    <property type="gene ID" value="APH_0734"/>
</dbReference>
<dbReference type="KEGG" id="aph:APH_0734"/>
<dbReference type="eggNOG" id="COG0492">
    <property type="taxonomic scope" value="Bacteria"/>
</dbReference>
<dbReference type="HOGENOM" id="CLU_031864_5_5_5"/>
<dbReference type="Proteomes" id="UP000001943">
    <property type="component" value="Chromosome"/>
</dbReference>
<dbReference type="GO" id="GO:0004324">
    <property type="term" value="F:ferredoxin-NADP+ reductase activity"/>
    <property type="evidence" value="ECO:0007669"/>
    <property type="project" value="UniProtKB-UniRule"/>
</dbReference>
<dbReference type="GO" id="GO:0050660">
    <property type="term" value="F:flavin adenine dinucleotide binding"/>
    <property type="evidence" value="ECO:0007669"/>
    <property type="project" value="UniProtKB-UniRule"/>
</dbReference>
<dbReference type="GO" id="GO:0050661">
    <property type="term" value="F:NADP binding"/>
    <property type="evidence" value="ECO:0007669"/>
    <property type="project" value="UniProtKB-UniRule"/>
</dbReference>
<dbReference type="Gene3D" id="3.50.50.60">
    <property type="entry name" value="FAD/NAD(P)-binding domain"/>
    <property type="match status" value="2"/>
</dbReference>
<dbReference type="HAMAP" id="MF_01685">
    <property type="entry name" value="FENR2"/>
    <property type="match status" value="1"/>
</dbReference>
<dbReference type="InterPro" id="IPR036188">
    <property type="entry name" value="FAD/NAD-bd_sf"/>
</dbReference>
<dbReference type="InterPro" id="IPR023753">
    <property type="entry name" value="FAD/NAD-binding_dom"/>
</dbReference>
<dbReference type="InterPro" id="IPR022890">
    <property type="entry name" value="Fd--NADP_Rdtase_type_2"/>
</dbReference>
<dbReference type="InterPro" id="IPR050097">
    <property type="entry name" value="Ferredoxin-NADP_redctase_2"/>
</dbReference>
<dbReference type="PANTHER" id="PTHR48105">
    <property type="entry name" value="THIOREDOXIN REDUCTASE 1-RELATED-RELATED"/>
    <property type="match status" value="1"/>
</dbReference>
<dbReference type="Pfam" id="PF07992">
    <property type="entry name" value="Pyr_redox_2"/>
    <property type="match status" value="1"/>
</dbReference>
<dbReference type="PRINTS" id="PR00368">
    <property type="entry name" value="FADPNR"/>
</dbReference>
<dbReference type="PRINTS" id="PR00469">
    <property type="entry name" value="PNDRDTASEII"/>
</dbReference>
<dbReference type="SUPFAM" id="SSF51905">
    <property type="entry name" value="FAD/NAD(P)-binding domain"/>
    <property type="match status" value="1"/>
</dbReference>
<comment type="catalytic activity">
    <reaction evidence="1">
        <text>2 reduced [2Fe-2S]-[ferredoxin] + NADP(+) + H(+) = 2 oxidized [2Fe-2S]-[ferredoxin] + NADPH</text>
        <dbReference type="Rhea" id="RHEA:20125"/>
        <dbReference type="Rhea" id="RHEA-COMP:10000"/>
        <dbReference type="Rhea" id="RHEA-COMP:10001"/>
        <dbReference type="ChEBI" id="CHEBI:15378"/>
        <dbReference type="ChEBI" id="CHEBI:33737"/>
        <dbReference type="ChEBI" id="CHEBI:33738"/>
        <dbReference type="ChEBI" id="CHEBI:57783"/>
        <dbReference type="ChEBI" id="CHEBI:58349"/>
        <dbReference type="EC" id="1.18.1.2"/>
    </reaction>
</comment>
<comment type="cofactor">
    <cofactor evidence="1">
        <name>FAD</name>
        <dbReference type="ChEBI" id="CHEBI:57692"/>
    </cofactor>
    <text evidence="1">Binds 1 FAD per subunit.</text>
</comment>
<comment type="subunit">
    <text evidence="1">Homodimer.</text>
</comment>
<comment type="similarity">
    <text evidence="1">Belongs to the ferredoxin--NADP reductase type 2 family.</text>
</comment>
<name>FENR_ANAPZ</name>